<protein>
    <recommendedName>
        <fullName evidence="1">Ion-translocating oxidoreductase complex subunit E</fullName>
        <ecNumber evidence="1">7.-.-.-</ecNumber>
    </recommendedName>
    <alternativeName>
        <fullName evidence="1">Rsx electron transport complex subunit E</fullName>
    </alternativeName>
</protein>
<reference key="1">
    <citation type="journal article" date="2005" name="Nucleic Acids Res.">
        <title>Genome dynamics and diversity of Shigella species, the etiologic agents of bacillary dysentery.</title>
        <authorList>
            <person name="Yang F."/>
            <person name="Yang J."/>
            <person name="Zhang X."/>
            <person name="Chen L."/>
            <person name="Jiang Y."/>
            <person name="Yan Y."/>
            <person name="Tang X."/>
            <person name="Wang J."/>
            <person name="Xiong Z."/>
            <person name="Dong J."/>
            <person name="Xue Y."/>
            <person name="Zhu Y."/>
            <person name="Xu X."/>
            <person name="Sun L."/>
            <person name="Chen S."/>
            <person name="Nie H."/>
            <person name="Peng J."/>
            <person name="Xu J."/>
            <person name="Wang Y."/>
            <person name="Yuan Z."/>
            <person name="Wen Y."/>
            <person name="Yao Z."/>
            <person name="Shen Y."/>
            <person name="Qiang B."/>
            <person name="Hou Y."/>
            <person name="Yu J."/>
            <person name="Jin Q."/>
        </authorList>
    </citation>
    <scope>NUCLEOTIDE SEQUENCE [LARGE SCALE GENOMIC DNA]</scope>
    <source>
        <strain>Sd197</strain>
    </source>
</reference>
<gene>
    <name evidence="1" type="primary">rsxE</name>
    <name type="ordered locus">SDY_1855</name>
</gene>
<comment type="function">
    <text evidence="1">Part of a membrane-bound complex that couples electron transfer with translocation of ions across the membrane. Required to maintain the reduced state of SoxR.</text>
</comment>
<comment type="subunit">
    <text evidence="1">The complex is composed of six subunits: RsxA, RsxB, RsxC, RsxD, RsxE and RsxG.</text>
</comment>
<comment type="subcellular location">
    <subcellularLocation>
        <location evidence="1">Cell inner membrane</location>
        <topology evidence="1">Multi-pass membrane protein</topology>
    </subcellularLocation>
</comment>
<comment type="similarity">
    <text evidence="1">Belongs to the NqrDE/RnfAE family.</text>
</comment>
<proteinExistence type="inferred from homology"/>
<feature type="chain" id="PRO_1000014110" description="Ion-translocating oxidoreductase complex subunit E">
    <location>
        <begin position="1"/>
        <end position="231"/>
    </location>
</feature>
<feature type="transmembrane region" description="Helical" evidence="1">
    <location>
        <begin position="18"/>
        <end position="38"/>
    </location>
</feature>
<feature type="transmembrane region" description="Helical" evidence="1">
    <location>
        <begin position="39"/>
        <end position="59"/>
    </location>
</feature>
<feature type="transmembrane region" description="Helical" evidence="1">
    <location>
        <begin position="63"/>
        <end position="83"/>
    </location>
</feature>
<feature type="transmembrane region" description="Helical" evidence="1">
    <location>
        <begin position="86"/>
        <end position="106"/>
    </location>
</feature>
<feature type="transmembrane region" description="Helical" evidence="1">
    <location>
        <begin position="125"/>
        <end position="145"/>
    </location>
</feature>
<feature type="transmembrane region" description="Helical" evidence="1">
    <location>
        <begin position="182"/>
        <end position="202"/>
    </location>
</feature>
<dbReference type="EC" id="7.-.-.-" evidence="1"/>
<dbReference type="EMBL" id="CP000034">
    <property type="protein sequence ID" value="ABB61964.1"/>
    <property type="molecule type" value="Genomic_DNA"/>
</dbReference>
<dbReference type="RefSeq" id="WP_001289652.1">
    <property type="nucleotide sequence ID" value="NC_007606.1"/>
</dbReference>
<dbReference type="RefSeq" id="YP_403455.1">
    <property type="nucleotide sequence ID" value="NC_007606.1"/>
</dbReference>
<dbReference type="SMR" id="Q32FE1"/>
<dbReference type="STRING" id="300267.SDY_1855"/>
<dbReference type="EnsemblBacteria" id="ABB61964">
    <property type="protein sequence ID" value="ABB61964"/>
    <property type="gene ID" value="SDY_1855"/>
</dbReference>
<dbReference type="KEGG" id="sdy:SDY_1855"/>
<dbReference type="PATRIC" id="fig|300267.13.peg.2234"/>
<dbReference type="HOGENOM" id="CLU_046659_1_0_6"/>
<dbReference type="Proteomes" id="UP000002716">
    <property type="component" value="Chromosome"/>
</dbReference>
<dbReference type="GO" id="GO:0005886">
    <property type="term" value="C:plasma membrane"/>
    <property type="evidence" value="ECO:0007669"/>
    <property type="project" value="UniProtKB-SubCell"/>
</dbReference>
<dbReference type="GO" id="GO:0022900">
    <property type="term" value="P:electron transport chain"/>
    <property type="evidence" value="ECO:0007669"/>
    <property type="project" value="UniProtKB-UniRule"/>
</dbReference>
<dbReference type="HAMAP" id="MF_00478">
    <property type="entry name" value="RsxE_RnfE"/>
    <property type="match status" value="1"/>
</dbReference>
<dbReference type="InterPro" id="IPR003667">
    <property type="entry name" value="NqrDE/RnfAE"/>
</dbReference>
<dbReference type="InterPro" id="IPR010968">
    <property type="entry name" value="RnfE"/>
</dbReference>
<dbReference type="NCBIfam" id="NF009070">
    <property type="entry name" value="PRK12405.1"/>
    <property type="match status" value="1"/>
</dbReference>
<dbReference type="NCBIfam" id="TIGR01948">
    <property type="entry name" value="rnfE"/>
    <property type="match status" value="1"/>
</dbReference>
<dbReference type="PANTHER" id="PTHR30586">
    <property type="entry name" value="ELECTRON TRANSPORT COMPLEX PROTEIN RNFE"/>
    <property type="match status" value="1"/>
</dbReference>
<dbReference type="PANTHER" id="PTHR30586:SF0">
    <property type="entry name" value="ION-TRANSLOCATING OXIDOREDUCTASE COMPLEX SUBUNIT E"/>
    <property type="match status" value="1"/>
</dbReference>
<dbReference type="Pfam" id="PF02508">
    <property type="entry name" value="Rnf-Nqr"/>
    <property type="match status" value="1"/>
</dbReference>
<dbReference type="PIRSF" id="PIRSF006102">
    <property type="entry name" value="NQR_DE"/>
    <property type="match status" value="1"/>
</dbReference>
<keyword id="KW-0997">Cell inner membrane</keyword>
<keyword id="KW-1003">Cell membrane</keyword>
<keyword id="KW-0249">Electron transport</keyword>
<keyword id="KW-0472">Membrane</keyword>
<keyword id="KW-1185">Reference proteome</keyword>
<keyword id="KW-1278">Translocase</keyword>
<keyword id="KW-0812">Transmembrane</keyword>
<keyword id="KW-1133">Transmembrane helix</keyword>
<keyword id="KW-0813">Transport</keyword>
<sequence>MSEIKDVIVQGLWKNNSALVQLLGLCPLLAVTSTATNALGLGLATTLVLTLTNLTISTLRHWTPAEIRIPIYVMIIASVVSAVQMLINAYAFGLYQSLGIFIPLIVTNCIVVGRAEAFAAKKGPALSALDGFSIGMGATCAMFVLGSLREIIGNGTLFDGADALLGSWAKVLRVEIFHTDSPFLLAMLPPGAFIGLGLMLAGKYLIDERMKKRRAEAAAERALPNGETGNV</sequence>
<accession>Q32FE1</accession>
<organism>
    <name type="scientific">Shigella dysenteriae serotype 1 (strain Sd197)</name>
    <dbReference type="NCBI Taxonomy" id="300267"/>
    <lineage>
        <taxon>Bacteria</taxon>
        <taxon>Pseudomonadati</taxon>
        <taxon>Pseudomonadota</taxon>
        <taxon>Gammaproteobacteria</taxon>
        <taxon>Enterobacterales</taxon>
        <taxon>Enterobacteriaceae</taxon>
        <taxon>Shigella</taxon>
    </lineage>
</organism>
<name>RSXE_SHIDS</name>
<evidence type="ECO:0000255" key="1">
    <source>
        <dbReference type="HAMAP-Rule" id="MF_00478"/>
    </source>
</evidence>